<name>ATP6_SYNE7</name>
<accession>Q31RF6</accession>
<reference key="1">
    <citation type="submission" date="2005-08" db="EMBL/GenBank/DDBJ databases">
        <title>Complete sequence of chromosome 1 of Synechococcus elongatus PCC 7942.</title>
        <authorList>
            <consortium name="US DOE Joint Genome Institute"/>
            <person name="Copeland A."/>
            <person name="Lucas S."/>
            <person name="Lapidus A."/>
            <person name="Barry K."/>
            <person name="Detter J.C."/>
            <person name="Glavina T."/>
            <person name="Hammon N."/>
            <person name="Israni S."/>
            <person name="Pitluck S."/>
            <person name="Schmutz J."/>
            <person name="Larimer F."/>
            <person name="Land M."/>
            <person name="Kyrpides N."/>
            <person name="Lykidis A."/>
            <person name="Golden S."/>
            <person name="Richardson P."/>
        </authorList>
    </citation>
    <scope>NUCLEOTIDE SEQUENCE [LARGE SCALE GENOMIC DNA]</scope>
    <source>
        <strain>ATCC 33912 / PCC 7942 / FACHB-805</strain>
    </source>
</reference>
<keyword id="KW-0066">ATP synthesis</keyword>
<keyword id="KW-0138">CF(0)</keyword>
<keyword id="KW-0375">Hydrogen ion transport</keyword>
<keyword id="KW-0406">Ion transport</keyword>
<keyword id="KW-0472">Membrane</keyword>
<keyword id="KW-1185">Reference proteome</keyword>
<keyword id="KW-0793">Thylakoid</keyword>
<keyword id="KW-0812">Transmembrane</keyword>
<keyword id="KW-1133">Transmembrane helix</keyword>
<keyword id="KW-0813">Transport</keyword>
<comment type="function">
    <text evidence="1">Key component of the proton channel; it plays a direct role in the translocation of protons across the membrane.</text>
</comment>
<comment type="subunit">
    <text evidence="1">F-type ATPases have 2 components, CF(1) - the catalytic core - and CF(0) - the membrane proton channel. CF(1) has five subunits: alpha(3), beta(3), gamma(1), delta(1), epsilon(1). CF(0) has four main subunits: a, b, b' and c.</text>
</comment>
<comment type="subcellular location">
    <subcellularLocation>
        <location evidence="1">Cellular thylakoid membrane</location>
        <topology evidence="1">Multi-pass membrane protein</topology>
    </subcellularLocation>
</comment>
<comment type="similarity">
    <text evidence="1">Belongs to the ATPase A chain family.</text>
</comment>
<comment type="sequence caution" evidence="2">
    <conflict type="erroneous initiation">
        <sequence resource="EMBL-CDS" id="ABB56363"/>
    </conflict>
</comment>
<evidence type="ECO:0000255" key="1">
    <source>
        <dbReference type="HAMAP-Rule" id="MF_01393"/>
    </source>
</evidence>
<evidence type="ECO:0000305" key="2"/>
<feature type="chain" id="PRO_0000362481" description="ATP synthase subunit a">
    <location>
        <begin position="1"/>
        <end position="249"/>
    </location>
</feature>
<feature type="transmembrane region" description="Helical" evidence="1">
    <location>
        <begin position="33"/>
        <end position="53"/>
    </location>
</feature>
<feature type="transmembrane region" description="Helical" evidence="1">
    <location>
        <begin position="92"/>
        <end position="112"/>
    </location>
</feature>
<feature type="transmembrane region" description="Helical" evidence="1">
    <location>
        <begin position="131"/>
        <end position="151"/>
    </location>
</feature>
<feature type="transmembrane region" description="Helical" evidence="1">
    <location>
        <begin position="196"/>
        <end position="216"/>
    </location>
</feature>
<feature type="transmembrane region" description="Helical" evidence="1">
    <location>
        <begin position="217"/>
        <end position="237"/>
    </location>
</feature>
<dbReference type="EMBL" id="CP000100">
    <property type="protein sequence ID" value="ABB56363.1"/>
    <property type="status" value="ALT_INIT"/>
    <property type="molecule type" value="Genomic_DNA"/>
</dbReference>
<dbReference type="SMR" id="Q31RF6"/>
<dbReference type="STRING" id="1140.Synpcc7942_0331"/>
<dbReference type="PaxDb" id="1140-Synpcc7942_0331"/>
<dbReference type="KEGG" id="syf:Synpcc7942_0331"/>
<dbReference type="eggNOG" id="COG0356">
    <property type="taxonomic scope" value="Bacteria"/>
</dbReference>
<dbReference type="HOGENOM" id="CLU_041018_2_4_3"/>
<dbReference type="BioCyc" id="MetaCyc:SYNPCC7942_0331-MONOMER"/>
<dbReference type="BioCyc" id="SYNEL:SYNPCC7942_0331-MONOMER"/>
<dbReference type="Proteomes" id="UP000889800">
    <property type="component" value="Chromosome"/>
</dbReference>
<dbReference type="GO" id="GO:0031676">
    <property type="term" value="C:plasma membrane-derived thylakoid membrane"/>
    <property type="evidence" value="ECO:0007669"/>
    <property type="project" value="UniProtKB-SubCell"/>
</dbReference>
<dbReference type="GO" id="GO:0045259">
    <property type="term" value="C:proton-transporting ATP synthase complex"/>
    <property type="evidence" value="ECO:0007669"/>
    <property type="project" value="UniProtKB-KW"/>
</dbReference>
<dbReference type="GO" id="GO:0046933">
    <property type="term" value="F:proton-transporting ATP synthase activity, rotational mechanism"/>
    <property type="evidence" value="ECO:0007669"/>
    <property type="project" value="UniProtKB-UniRule"/>
</dbReference>
<dbReference type="CDD" id="cd00310">
    <property type="entry name" value="ATP-synt_Fo_a_6"/>
    <property type="match status" value="1"/>
</dbReference>
<dbReference type="FunFam" id="1.20.120.220:FF:000001">
    <property type="entry name" value="ATP synthase subunit a, chloroplastic"/>
    <property type="match status" value="1"/>
</dbReference>
<dbReference type="Gene3D" id="1.20.120.220">
    <property type="entry name" value="ATP synthase, F0 complex, subunit A"/>
    <property type="match status" value="1"/>
</dbReference>
<dbReference type="HAMAP" id="MF_01393">
    <property type="entry name" value="ATP_synth_a_bact"/>
    <property type="match status" value="1"/>
</dbReference>
<dbReference type="InterPro" id="IPR045082">
    <property type="entry name" value="ATP_syn_F0_a_bact/chloroplast"/>
</dbReference>
<dbReference type="InterPro" id="IPR000568">
    <property type="entry name" value="ATP_synth_F0_asu"/>
</dbReference>
<dbReference type="InterPro" id="IPR023011">
    <property type="entry name" value="ATP_synth_F0_asu_AS"/>
</dbReference>
<dbReference type="InterPro" id="IPR035908">
    <property type="entry name" value="F0_ATP_A_sf"/>
</dbReference>
<dbReference type="NCBIfam" id="TIGR01131">
    <property type="entry name" value="ATP_synt_6_or_A"/>
    <property type="match status" value="1"/>
</dbReference>
<dbReference type="PANTHER" id="PTHR42823">
    <property type="entry name" value="ATP SYNTHASE SUBUNIT A, CHLOROPLASTIC"/>
    <property type="match status" value="1"/>
</dbReference>
<dbReference type="PANTHER" id="PTHR42823:SF3">
    <property type="entry name" value="ATP SYNTHASE SUBUNIT A, CHLOROPLASTIC"/>
    <property type="match status" value="1"/>
</dbReference>
<dbReference type="Pfam" id="PF00119">
    <property type="entry name" value="ATP-synt_A"/>
    <property type="match status" value="1"/>
</dbReference>
<dbReference type="PRINTS" id="PR00123">
    <property type="entry name" value="ATPASEA"/>
</dbReference>
<dbReference type="SUPFAM" id="SSF81336">
    <property type="entry name" value="F1F0 ATP synthase subunit A"/>
    <property type="match status" value="1"/>
</dbReference>
<dbReference type="PROSITE" id="PS00449">
    <property type="entry name" value="ATPASE_A"/>
    <property type="match status" value="1"/>
</dbReference>
<organism>
    <name type="scientific">Synechococcus elongatus (strain ATCC 33912 / PCC 7942 / FACHB-805)</name>
    <name type="common">Anacystis nidulans R2</name>
    <dbReference type="NCBI Taxonomy" id="1140"/>
    <lineage>
        <taxon>Bacteria</taxon>
        <taxon>Bacillati</taxon>
        <taxon>Cyanobacteriota</taxon>
        <taxon>Cyanophyceae</taxon>
        <taxon>Synechococcales</taxon>
        <taxon>Synechococcaceae</taxon>
        <taxon>Synechococcus</taxon>
    </lineage>
</organism>
<protein>
    <recommendedName>
        <fullName evidence="1">ATP synthase subunit a</fullName>
    </recommendedName>
    <alternativeName>
        <fullName evidence="1">ATP synthase F0 sector subunit a</fullName>
    </alternativeName>
    <alternativeName>
        <fullName evidence="1">F-ATPase subunit 6</fullName>
    </alternativeName>
</protein>
<sequence>MPTLLELSSVLPLAELEVGQHFYWQIGNYRLHGQVFLTSWFVIAALVVLSLLANRNLQRIPSGLQNFMEYVLDFIRNLARTQIGEKEYRPWVPFIGTLFLFIFLSNWSGALIPWKLIKLPSGELAAPTSDINTTVALALLTSLAYFYAGFSRKGLGYFGNYVHPTPVMLPFKILEDFTKPLSLSFRLFGNILADELVVAVLVLLVPLFVPLPAMILGLFTSAIQALIFATLAASYIGEAVEEHGEEHAE</sequence>
<gene>
    <name evidence="1" type="primary">atpB</name>
    <name evidence="1" type="synonym">atpI</name>
    <name type="ordered locus">Synpcc7942_0331</name>
</gene>
<proteinExistence type="inferred from homology"/>